<name>ENY2_DROMO</name>
<dbReference type="EMBL" id="CH933810">
    <property type="protein sequence ID" value="EDW07719.1"/>
    <property type="molecule type" value="Genomic_DNA"/>
</dbReference>
<dbReference type="SMR" id="B4L1Z8"/>
<dbReference type="FunCoup" id="B4L1Z8">
    <property type="interactions" value="1606"/>
</dbReference>
<dbReference type="EnsemblMetazoa" id="FBtr0166627">
    <property type="protein sequence ID" value="FBpp0165119"/>
    <property type="gene ID" value="FBgn0138651"/>
</dbReference>
<dbReference type="EnsemblMetazoa" id="XM_002010366.4">
    <property type="protein sequence ID" value="XP_002010402.1"/>
    <property type="gene ID" value="LOC6584760"/>
</dbReference>
<dbReference type="GeneID" id="6584760"/>
<dbReference type="KEGG" id="dmo:Dmoj_GI15902"/>
<dbReference type="CTD" id="45848"/>
<dbReference type="eggNOG" id="KOG4479">
    <property type="taxonomic scope" value="Eukaryota"/>
</dbReference>
<dbReference type="HOGENOM" id="CLU_134052_1_1_1"/>
<dbReference type="InParanoid" id="B4L1Z8"/>
<dbReference type="OMA" id="RLMCRNI"/>
<dbReference type="OrthoDB" id="6221744at2759"/>
<dbReference type="PhylomeDB" id="B4L1Z8"/>
<dbReference type="Proteomes" id="UP000009192">
    <property type="component" value="Unassembled WGS sequence"/>
</dbReference>
<dbReference type="GO" id="GO:0005737">
    <property type="term" value="C:cytoplasm"/>
    <property type="evidence" value="ECO:0007669"/>
    <property type="project" value="UniProtKB-SubCell"/>
</dbReference>
<dbReference type="GO" id="GO:0071819">
    <property type="term" value="C:DUBm complex"/>
    <property type="evidence" value="ECO:0007669"/>
    <property type="project" value="UniProtKB-UniRule"/>
</dbReference>
<dbReference type="GO" id="GO:0005643">
    <property type="term" value="C:nuclear pore"/>
    <property type="evidence" value="ECO:0000250"/>
    <property type="project" value="UniProtKB"/>
</dbReference>
<dbReference type="GO" id="GO:0005654">
    <property type="term" value="C:nucleoplasm"/>
    <property type="evidence" value="ECO:0007669"/>
    <property type="project" value="UniProtKB-SubCell"/>
</dbReference>
<dbReference type="GO" id="GO:0000124">
    <property type="term" value="C:SAGA complex"/>
    <property type="evidence" value="ECO:0000250"/>
    <property type="project" value="UniProtKB"/>
</dbReference>
<dbReference type="GO" id="GO:0070390">
    <property type="term" value="C:transcription export complex 2"/>
    <property type="evidence" value="ECO:0007669"/>
    <property type="project" value="UniProtKB-UniRule"/>
</dbReference>
<dbReference type="GO" id="GO:0043035">
    <property type="term" value="F:chromatin insulator sequence binding"/>
    <property type="evidence" value="ECO:0000250"/>
    <property type="project" value="UniProtKB"/>
</dbReference>
<dbReference type="GO" id="GO:0003713">
    <property type="term" value="F:transcription coactivator activity"/>
    <property type="evidence" value="ECO:0007669"/>
    <property type="project" value="UniProtKB-UniRule"/>
</dbReference>
<dbReference type="GO" id="GO:0006325">
    <property type="term" value="P:chromatin organization"/>
    <property type="evidence" value="ECO:0007669"/>
    <property type="project" value="UniProtKB-KW"/>
</dbReference>
<dbReference type="GO" id="GO:0006406">
    <property type="term" value="P:mRNA export from nucleus"/>
    <property type="evidence" value="ECO:0000250"/>
    <property type="project" value="UniProtKB"/>
</dbReference>
<dbReference type="GO" id="GO:0045944">
    <property type="term" value="P:positive regulation of transcription by RNA polymerase II"/>
    <property type="evidence" value="ECO:0000250"/>
    <property type="project" value="UniProtKB"/>
</dbReference>
<dbReference type="GO" id="GO:0015031">
    <property type="term" value="P:protein transport"/>
    <property type="evidence" value="ECO:0007669"/>
    <property type="project" value="UniProtKB-KW"/>
</dbReference>
<dbReference type="GO" id="GO:0006368">
    <property type="term" value="P:transcription elongation by RNA polymerase II"/>
    <property type="evidence" value="ECO:0007669"/>
    <property type="project" value="UniProtKB-UniRule"/>
</dbReference>
<dbReference type="FunFam" id="1.10.246.140:FF:000002">
    <property type="entry name" value="Enhancer of yellow 2 transcription factor"/>
    <property type="match status" value="1"/>
</dbReference>
<dbReference type="Gene3D" id="1.10.246.140">
    <property type="match status" value="1"/>
</dbReference>
<dbReference type="HAMAP" id="MF_03046">
    <property type="entry name" value="ENY2_Sus1"/>
    <property type="match status" value="1"/>
</dbReference>
<dbReference type="InterPro" id="IPR018783">
    <property type="entry name" value="TF_ENY2"/>
</dbReference>
<dbReference type="InterPro" id="IPR038212">
    <property type="entry name" value="TF_EnY2_sf"/>
</dbReference>
<dbReference type="PANTHER" id="PTHR12514">
    <property type="entry name" value="ENHANCER OF YELLOW 2 TRANSCRIPTION FACTOR"/>
    <property type="match status" value="1"/>
</dbReference>
<dbReference type="Pfam" id="PF10163">
    <property type="entry name" value="EnY2"/>
    <property type="match status" value="1"/>
</dbReference>
<accession>B4L1Z8</accession>
<gene>
    <name evidence="2" type="primary">e(y)2</name>
    <name type="ORF">GI15902</name>
</gene>
<feature type="chain" id="PRO_0000367556" description="Enhancer of yellow 2 transcription factor">
    <location>
        <begin position="1"/>
        <end position="94"/>
    </location>
</feature>
<proteinExistence type="inferred from homology"/>
<organism>
    <name type="scientific">Drosophila mojavensis</name>
    <name type="common">Fruit fly</name>
    <dbReference type="NCBI Taxonomy" id="7230"/>
    <lineage>
        <taxon>Eukaryota</taxon>
        <taxon>Metazoa</taxon>
        <taxon>Ecdysozoa</taxon>
        <taxon>Arthropoda</taxon>
        <taxon>Hexapoda</taxon>
        <taxon>Insecta</taxon>
        <taxon>Pterygota</taxon>
        <taxon>Neoptera</taxon>
        <taxon>Endopterygota</taxon>
        <taxon>Diptera</taxon>
        <taxon>Brachycera</taxon>
        <taxon>Muscomorpha</taxon>
        <taxon>Ephydroidea</taxon>
        <taxon>Drosophilidae</taxon>
        <taxon>Drosophila</taxon>
    </lineage>
</organism>
<evidence type="ECO:0000250" key="1"/>
<evidence type="ECO:0000255" key="2">
    <source>
        <dbReference type="HAMAP-Rule" id="MF_03046"/>
    </source>
</evidence>
<comment type="function">
    <text evidence="1">Involved in mRNA export coupled transcription activation by association with both the AMEX and the SAGA complexes. The SAGA complex is a multiprotein complex that activates transcription by remodeling chromatin and mediating histone acetylation and deubiquitination. Within the SAGA complex, participates in a subcomplex that specifically deubiquitinates histone H2B. The SAGA complex is recruited to specific gene promoters by activators, where it is required for transcription. Required for nuclear receptor-mediated transactivation. Involved in transcription elongation by recruiting the THO complex onto nascent mRNA. The AMEX complex functions in docking export-competent ribonucleoprotein particles (mRNPs) to the nuclear entrance of the nuclear pore complex (nuclear basket). AMEX participates in mRNA export and accurate chromatin positioning in the nucleus by tethering genes to the nuclear periphery (By similarity).</text>
</comment>
<comment type="subunit">
    <text evidence="2">Component of the nuclear pore complex (NPC)-associated AMEX complex (anchoring and mRNA export complex), composed of at least e(y)2 and xmas-2. Component of the SAGA transcription coactivator-HAT complexes, at least composed of Ada2b, e(y)2, Pcaf/Gcn5, Taf10 and Nipped-A/Trrap. Within the SAGA complex, e(y)2, Sgf11, and not/nonstop form an additional subcomplex of SAGA called the DUB module (deubiquitination module). Component of the THO complex, composed of at least e(y)2, HPR1, THO2, THOC5, THOC6 and THOC7. Interacts with e(y)1. Interacts with su(Hw) (via zinc fingers). Interacts with xmas-2; required for localization to the nuclear periphery. Interacts with the nuclear pore complex (NPC).</text>
</comment>
<comment type="subcellular location">
    <subcellularLocation>
        <location evidence="2">Nucleus</location>
        <location evidence="2">Nucleoplasm</location>
    </subcellularLocation>
    <subcellularLocation>
        <location evidence="2">Cytoplasm</location>
    </subcellularLocation>
</comment>
<comment type="similarity">
    <text evidence="2">Belongs to the ENY2 family.</text>
</comment>
<sequence>MTVSNTVDQYTIMSGDRSKIKDLLCNRLTECGWRDEVRLLCRNILVEKNGNNSLSVEQLIAEVTPKARTLVPDAVKKELLMKIRTILAENEGDN</sequence>
<keyword id="KW-0010">Activator</keyword>
<keyword id="KW-0156">Chromatin regulator</keyword>
<keyword id="KW-0963">Cytoplasm</keyword>
<keyword id="KW-0509">mRNA transport</keyword>
<keyword id="KW-0539">Nucleus</keyword>
<keyword id="KW-0653">Protein transport</keyword>
<keyword id="KW-1185">Reference proteome</keyword>
<keyword id="KW-0804">Transcription</keyword>
<keyword id="KW-0805">Transcription regulation</keyword>
<keyword id="KW-0811">Translocation</keyword>
<keyword id="KW-0813">Transport</keyword>
<protein>
    <recommendedName>
        <fullName evidence="2">Enhancer of yellow 2 transcription factor</fullName>
    </recommendedName>
</protein>
<reference key="1">
    <citation type="journal article" date="2007" name="Nature">
        <title>Evolution of genes and genomes on the Drosophila phylogeny.</title>
        <authorList>
            <consortium name="Drosophila 12 genomes consortium"/>
        </authorList>
    </citation>
    <scope>NUCLEOTIDE SEQUENCE [LARGE SCALE GENOMIC DNA]</scope>
    <source>
        <strain>Tucson 15081-1352.22</strain>
    </source>
</reference>